<reference key="1">
    <citation type="journal article" date="2007" name="Proc. Natl. Acad. Sci. U.S.A.">
        <title>Genomic and metabolic adaptations of Methanobrevibacter smithii to the human gut.</title>
        <authorList>
            <person name="Samuel B.S."/>
            <person name="Hansen E.E."/>
            <person name="Manchester J.K."/>
            <person name="Coutinho P.M."/>
            <person name="Henrissat B."/>
            <person name="Fulton R."/>
            <person name="Latreille P."/>
            <person name="Kim K."/>
            <person name="Wilson R.K."/>
            <person name="Gordon J.I."/>
        </authorList>
    </citation>
    <scope>NUCLEOTIDE SEQUENCE [LARGE SCALE GENOMIC DNA]</scope>
    <source>
        <strain>ATCC 35061 / DSM 861 / OCM 144 / PS</strain>
    </source>
</reference>
<protein>
    <recommendedName>
        <fullName evidence="1">UPF0179 protein Msm_0285</fullName>
    </recommendedName>
</protein>
<proteinExistence type="inferred from homology"/>
<gene>
    <name type="ordered locus">Msm_0285</name>
</gene>
<name>Y285_METS3</name>
<dbReference type="EMBL" id="CP000678">
    <property type="protein sequence ID" value="ABQ86490.1"/>
    <property type="molecule type" value="Genomic_DNA"/>
</dbReference>
<dbReference type="RefSeq" id="WP_004034396.1">
    <property type="nucleotide sequence ID" value="NZ_CP117965.1"/>
</dbReference>
<dbReference type="STRING" id="420247.Msm_0285"/>
<dbReference type="EnsemblBacteria" id="ABQ86490">
    <property type="protein sequence ID" value="ABQ86490"/>
    <property type="gene ID" value="Msm_0285"/>
</dbReference>
<dbReference type="KEGG" id="msi:Msm_0285"/>
<dbReference type="PATRIC" id="fig|420247.28.peg.288"/>
<dbReference type="eggNOG" id="arCOG04477">
    <property type="taxonomic scope" value="Archaea"/>
</dbReference>
<dbReference type="HOGENOM" id="CLU_121764_0_0_2"/>
<dbReference type="BioCyc" id="MSMI420247:GHWZ-287-MONOMER"/>
<dbReference type="Proteomes" id="UP000001992">
    <property type="component" value="Chromosome"/>
</dbReference>
<dbReference type="HAMAP" id="MF_00498">
    <property type="entry name" value="UPF0179"/>
    <property type="match status" value="1"/>
</dbReference>
<dbReference type="InterPro" id="IPR005369">
    <property type="entry name" value="UPF0179"/>
</dbReference>
<dbReference type="PANTHER" id="PTHR40699">
    <property type="entry name" value="UPF0179 PROTEIN MJ1627"/>
    <property type="match status" value="1"/>
</dbReference>
<dbReference type="PANTHER" id="PTHR40699:SF1">
    <property type="entry name" value="UPF0179 PROTEIN MJ1627"/>
    <property type="match status" value="1"/>
</dbReference>
<dbReference type="Pfam" id="PF03684">
    <property type="entry name" value="UPF0179"/>
    <property type="match status" value="1"/>
</dbReference>
<dbReference type="PIRSF" id="PIRSF006595">
    <property type="entry name" value="UCP006595"/>
    <property type="match status" value="1"/>
</dbReference>
<accession>A5UJW2</accession>
<organism>
    <name type="scientific">Methanobrevibacter smithii (strain ATCC 35061 / DSM 861 / OCM 144 / PS)</name>
    <dbReference type="NCBI Taxonomy" id="420247"/>
    <lineage>
        <taxon>Archaea</taxon>
        <taxon>Methanobacteriati</taxon>
        <taxon>Methanobacteriota</taxon>
        <taxon>Methanomada group</taxon>
        <taxon>Methanobacteria</taxon>
        <taxon>Methanobacteriales</taxon>
        <taxon>Methanobacteriaceae</taxon>
        <taxon>Methanobrevibacter</taxon>
    </lineage>
</organism>
<sequence length="145" mass="16444">MITLIGKDLAKKGNEFIFYGSVDECENCRFKASCVDSLEKNRKYKIIDVRDNEQKCPVHAENTVIPVEVDRSNITLLSSSKSIFEGSTFSYESADCDEECEYYDYCFPEGLVDGDKCIVLKNHGKHKGECKKGYKLNKLTLGFVI</sequence>
<feature type="chain" id="PRO_1000014535" description="UPF0179 protein Msm_0285">
    <location>
        <begin position="1"/>
        <end position="145"/>
    </location>
</feature>
<evidence type="ECO:0000255" key="1">
    <source>
        <dbReference type="HAMAP-Rule" id="MF_00498"/>
    </source>
</evidence>
<comment type="similarity">
    <text evidence="1">Belongs to the UPF0179 family.</text>
</comment>